<reference key="1">
    <citation type="journal article" date="1988" name="Gen. Comp. Endocrinol.">
        <title>Isolation of alligator gar (Lepisosteus spatula) glucagon, oxyntomodulin, and glucagon-like peptide: amino acid sequences of oxyntomodulin and glucagon-like peptide.</title>
        <authorList>
            <person name="Pollock H.G."/>
            <person name="Kimmel J.R."/>
            <person name="Ebner K.E."/>
            <person name="Hamilton J.W."/>
            <person name="Rouse J.B."/>
            <person name="Lance V."/>
            <person name="Rawitch A.B."/>
        </authorList>
    </citation>
    <scope>PROTEIN SEQUENCE OF 1-36 AND 45-78</scope>
    <source>
        <tissue>Pancreas</tissue>
    </source>
</reference>
<reference key="2">
    <citation type="journal article" date="1987" name="Gen. Comp. Endocrinol.">
        <title>Isolation and structures of alligator gar (Lepisosteus spatula) insulin and pancreatic polypeptide.</title>
        <authorList>
            <person name="Pollock H.G."/>
            <person name="Kimmel J.R."/>
            <person name="Hamilton J.W."/>
            <person name="Rouse J.B."/>
            <person name="Ebner K.E."/>
            <person name="Lance V."/>
            <person name="Rawitch A.B."/>
        </authorList>
    </citation>
    <scope>PRELIMINARY PROTEIN SEQUENCE OF 1-29</scope>
    <source>
        <tissue>Pancreas</tissue>
    </source>
</reference>
<evidence type="ECO:0000250" key="1">
    <source>
        <dbReference type="UniProtKB" id="P01275"/>
    </source>
</evidence>
<evidence type="ECO:0000269" key="2">
    <source>
    </source>
</evidence>
<evidence type="ECO:0000305" key="3"/>
<accession>P09566</accession>
<feature type="peptide" id="PRO_0000011340" description="Oxyntomodulin" evidence="2">
    <location>
        <begin position="1"/>
        <end position="36"/>
    </location>
</feature>
<feature type="peptide" id="PRO_0000011341" description="Glucagon" evidence="2">
    <location>
        <begin position="1"/>
        <end position="29"/>
    </location>
</feature>
<feature type="peptide" id="PRO_0000011342" description="Glucagon-like peptide" evidence="2">
    <location>
        <begin position="45"/>
        <end position="78"/>
    </location>
</feature>
<sequence>HSQGTFTNDYSKYLDTRRAQDFVQWLMSTKRSGGITXXXXXXXXHADGTYTSDVSSYLQDQAAKKFVTWLKQGQDRRE</sequence>
<protein>
    <recommendedName>
        <fullName>Pro-glucagon</fullName>
    </recommendedName>
    <component>
        <recommendedName>
            <fullName>Oxyntomodulin</fullName>
        </recommendedName>
        <alternativeName>
            <fullName>Glucagon-36</fullName>
        </alternativeName>
    </component>
    <component>
        <recommendedName>
            <fullName>Glucagon</fullName>
        </recommendedName>
    </component>
    <component>
        <recommendedName>
            <fullName>Glucagon-like peptide</fullName>
        </recommendedName>
    </component>
</protein>
<organism>
    <name type="scientific">Atractosteus spatula</name>
    <name type="common">Alligator gar</name>
    <name type="synonym">Lepisosteus spatula</name>
    <dbReference type="NCBI Taxonomy" id="7917"/>
    <lineage>
        <taxon>Eukaryota</taxon>
        <taxon>Metazoa</taxon>
        <taxon>Chordata</taxon>
        <taxon>Craniata</taxon>
        <taxon>Vertebrata</taxon>
        <taxon>Euteleostomi</taxon>
        <taxon>Actinopterygii</taxon>
        <taxon>Neopterygii</taxon>
        <taxon>Holostei</taxon>
        <taxon>Semionotiformes</taxon>
        <taxon>Lepisosteidae</taxon>
        <taxon>Atractosteus</taxon>
    </lineage>
</organism>
<dbReference type="PIR" id="S06339">
    <property type="entry name" value="GCGXA"/>
</dbReference>
<dbReference type="GO" id="GO:0005576">
    <property type="term" value="C:extracellular region"/>
    <property type="evidence" value="ECO:0007669"/>
    <property type="project" value="UniProtKB-SubCell"/>
</dbReference>
<dbReference type="GO" id="GO:0005179">
    <property type="term" value="F:hormone activity"/>
    <property type="evidence" value="ECO:0007669"/>
    <property type="project" value="UniProtKB-KW"/>
</dbReference>
<dbReference type="Gene3D" id="6.10.250.590">
    <property type="match status" value="2"/>
</dbReference>
<dbReference type="InterPro" id="IPR015550">
    <property type="entry name" value="Glucagon"/>
</dbReference>
<dbReference type="InterPro" id="IPR000532">
    <property type="entry name" value="Glucagon_GIP_secretin_VIP"/>
</dbReference>
<dbReference type="PANTHER" id="PTHR11418">
    <property type="entry name" value="GLUCAGON"/>
    <property type="match status" value="1"/>
</dbReference>
<dbReference type="PANTHER" id="PTHR11418:SF0">
    <property type="entry name" value="PRO-GLUCAGON"/>
    <property type="match status" value="1"/>
</dbReference>
<dbReference type="Pfam" id="PF00123">
    <property type="entry name" value="Hormone_2"/>
    <property type="match status" value="2"/>
</dbReference>
<dbReference type="PRINTS" id="PR00275">
    <property type="entry name" value="GLUCAGON"/>
</dbReference>
<dbReference type="SMART" id="SM00070">
    <property type="entry name" value="GLUCA"/>
    <property type="match status" value="2"/>
</dbReference>
<dbReference type="PROSITE" id="PS00260">
    <property type="entry name" value="GLUCAGON"/>
    <property type="match status" value="2"/>
</dbReference>
<keyword id="KW-0903">Direct protein sequencing</keyword>
<keyword id="KW-0372">Hormone</keyword>
<keyword id="KW-0964">Secreted</keyword>
<name>GLUC_ATRSP</name>
<comment type="function">
    <molecule>Glucagon</molecule>
    <text evidence="1">Plays a key role in glucose metabolism and homeostasis. Regulates blood glucose by increasing gluconeogenesis and decreasing glycolysis.</text>
</comment>
<comment type="subcellular location">
    <subcellularLocation>
        <location>Secreted</location>
    </subcellularLocation>
</comment>
<comment type="induction">
    <text>Produced in the A cells of the islets of Langerhans in response to a drop in blood sugar concentration.</text>
</comment>
<comment type="miscellaneous">
    <text>X's in the sequence were included by homology with American goosefish sequences.</text>
</comment>
<comment type="similarity">
    <text evidence="3">Belongs to the glucagon family.</text>
</comment>
<gene>
    <name type="primary">gcg</name>
</gene>
<proteinExistence type="evidence at protein level"/>